<proteinExistence type="inferred from homology"/>
<gene>
    <name evidence="1" type="primary">acpS</name>
    <name type="ordered locus">LAF_0210</name>
</gene>
<accession>B2GA64</accession>
<reference key="1">
    <citation type="journal article" date="2008" name="DNA Res.">
        <title>Comparative genome analysis of Lactobacillus reuteri and Lactobacillus fermentum reveal a genomic island for reuterin and cobalamin production.</title>
        <authorList>
            <person name="Morita H."/>
            <person name="Toh H."/>
            <person name="Fukuda S."/>
            <person name="Horikawa H."/>
            <person name="Oshima K."/>
            <person name="Suzuki T."/>
            <person name="Murakami M."/>
            <person name="Hisamatsu S."/>
            <person name="Kato Y."/>
            <person name="Takizawa T."/>
            <person name="Fukuoka H."/>
            <person name="Yoshimura T."/>
            <person name="Itoh K."/>
            <person name="O'Sullivan D.J."/>
            <person name="McKay L.L."/>
            <person name="Ohno H."/>
            <person name="Kikuchi J."/>
            <person name="Masaoka T."/>
            <person name="Hattori M."/>
        </authorList>
    </citation>
    <scope>NUCLEOTIDE SEQUENCE [LARGE SCALE GENOMIC DNA]</scope>
    <source>
        <strain>NBRC 3956 / LMG 18251</strain>
    </source>
</reference>
<comment type="function">
    <text evidence="1">Transfers the 4'-phosphopantetheine moiety from coenzyme A to a Ser of acyl-carrier-protein.</text>
</comment>
<comment type="catalytic activity">
    <reaction evidence="1">
        <text>apo-[ACP] + CoA = holo-[ACP] + adenosine 3',5'-bisphosphate + H(+)</text>
        <dbReference type="Rhea" id="RHEA:12068"/>
        <dbReference type="Rhea" id="RHEA-COMP:9685"/>
        <dbReference type="Rhea" id="RHEA-COMP:9690"/>
        <dbReference type="ChEBI" id="CHEBI:15378"/>
        <dbReference type="ChEBI" id="CHEBI:29999"/>
        <dbReference type="ChEBI" id="CHEBI:57287"/>
        <dbReference type="ChEBI" id="CHEBI:58343"/>
        <dbReference type="ChEBI" id="CHEBI:64479"/>
        <dbReference type="EC" id="2.7.8.7"/>
    </reaction>
</comment>
<comment type="cofactor">
    <cofactor evidence="1">
        <name>Mg(2+)</name>
        <dbReference type="ChEBI" id="CHEBI:18420"/>
    </cofactor>
</comment>
<comment type="subcellular location">
    <subcellularLocation>
        <location evidence="1">Cytoplasm</location>
    </subcellularLocation>
</comment>
<comment type="similarity">
    <text evidence="1">Belongs to the P-Pant transferase superfamily. AcpS family.</text>
</comment>
<sequence>MIAGIGIDVAEIDRIKRAVEKTPSFINKVLTKGEQAQLATLKNQRYYEYIAGRFSLKEAYSKALGTGIGRHVSFLDVEIIDNELGQPVVVSHPFDGPAHASVSHTGQLVFTEVILEKGE</sequence>
<organism>
    <name type="scientific">Limosilactobacillus fermentum (strain NBRC 3956 / LMG 18251)</name>
    <name type="common">Lactobacillus fermentum</name>
    <dbReference type="NCBI Taxonomy" id="334390"/>
    <lineage>
        <taxon>Bacteria</taxon>
        <taxon>Bacillati</taxon>
        <taxon>Bacillota</taxon>
        <taxon>Bacilli</taxon>
        <taxon>Lactobacillales</taxon>
        <taxon>Lactobacillaceae</taxon>
        <taxon>Limosilactobacillus</taxon>
    </lineage>
</organism>
<keyword id="KW-0963">Cytoplasm</keyword>
<keyword id="KW-0275">Fatty acid biosynthesis</keyword>
<keyword id="KW-0276">Fatty acid metabolism</keyword>
<keyword id="KW-0444">Lipid biosynthesis</keyword>
<keyword id="KW-0443">Lipid metabolism</keyword>
<keyword id="KW-0460">Magnesium</keyword>
<keyword id="KW-0479">Metal-binding</keyword>
<keyword id="KW-1185">Reference proteome</keyword>
<keyword id="KW-0808">Transferase</keyword>
<name>ACPS_LIMF3</name>
<protein>
    <recommendedName>
        <fullName evidence="1">Holo-[acyl-carrier-protein] synthase</fullName>
        <shortName evidence="1">Holo-ACP synthase</shortName>
        <ecNumber evidence="1">2.7.8.7</ecNumber>
    </recommendedName>
    <alternativeName>
        <fullName evidence="1">4'-phosphopantetheinyl transferase AcpS</fullName>
    </alternativeName>
</protein>
<evidence type="ECO:0000255" key="1">
    <source>
        <dbReference type="HAMAP-Rule" id="MF_00101"/>
    </source>
</evidence>
<dbReference type="EC" id="2.7.8.7" evidence="1"/>
<dbReference type="EMBL" id="AP008937">
    <property type="protein sequence ID" value="BAG26546.1"/>
    <property type="molecule type" value="Genomic_DNA"/>
</dbReference>
<dbReference type="RefSeq" id="WP_003684028.1">
    <property type="nucleotide sequence ID" value="NC_010610.1"/>
</dbReference>
<dbReference type="SMR" id="B2GA64"/>
<dbReference type="GeneID" id="83715475"/>
<dbReference type="KEGG" id="lfe:LAF_0210"/>
<dbReference type="eggNOG" id="COG0736">
    <property type="taxonomic scope" value="Bacteria"/>
</dbReference>
<dbReference type="HOGENOM" id="CLU_089696_1_2_9"/>
<dbReference type="Proteomes" id="UP000001697">
    <property type="component" value="Chromosome"/>
</dbReference>
<dbReference type="GO" id="GO:0005829">
    <property type="term" value="C:cytosol"/>
    <property type="evidence" value="ECO:0007669"/>
    <property type="project" value="TreeGrafter"/>
</dbReference>
<dbReference type="GO" id="GO:0008897">
    <property type="term" value="F:holo-[acyl-carrier-protein] synthase activity"/>
    <property type="evidence" value="ECO:0007669"/>
    <property type="project" value="UniProtKB-UniRule"/>
</dbReference>
<dbReference type="GO" id="GO:0000287">
    <property type="term" value="F:magnesium ion binding"/>
    <property type="evidence" value="ECO:0007669"/>
    <property type="project" value="UniProtKB-UniRule"/>
</dbReference>
<dbReference type="GO" id="GO:0006633">
    <property type="term" value="P:fatty acid biosynthetic process"/>
    <property type="evidence" value="ECO:0007669"/>
    <property type="project" value="UniProtKB-UniRule"/>
</dbReference>
<dbReference type="GO" id="GO:0019878">
    <property type="term" value="P:lysine biosynthetic process via aminoadipic acid"/>
    <property type="evidence" value="ECO:0007669"/>
    <property type="project" value="TreeGrafter"/>
</dbReference>
<dbReference type="Gene3D" id="3.90.470.20">
    <property type="entry name" value="4'-phosphopantetheinyl transferase domain"/>
    <property type="match status" value="1"/>
</dbReference>
<dbReference type="HAMAP" id="MF_00101">
    <property type="entry name" value="AcpS"/>
    <property type="match status" value="1"/>
</dbReference>
<dbReference type="InterPro" id="IPR008278">
    <property type="entry name" value="4-PPantetheinyl_Trfase_dom"/>
</dbReference>
<dbReference type="InterPro" id="IPR037143">
    <property type="entry name" value="4-PPantetheinyl_Trfase_dom_sf"/>
</dbReference>
<dbReference type="InterPro" id="IPR002582">
    <property type="entry name" value="ACPS"/>
</dbReference>
<dbReference type="InterPro" id="IPR050559">
    <property type="entry name" value="P-Pant_transferase_sf"/>
</dbReference>
<dbReference type="InterPro" id="IPR004568">
    <property type="entry name" value="Ppantetheine-prot_Trfase_dom"/>
</dbReference>
<dbReference type="NCBIfam" id="TIGR00516">
    <property type="entry name" value="acpS"/>
    <property type="match status" value="1"/>
</dbReference>
<dbReference type="NCBIfam" id="TIGR00556">
    <property type="entry name" value="pantethn_trn"/>
    <property type="match status" value="1"/>
</dbReference>
<dbReference type="PANTHER" id="PTHR12215:SF10">
    <property type="entry name" value="L-AMINOADIPATE-SEMIALDEHYDE DEHYDROGENASE-PHOSPHOPANTETHEINYL TRANSFERASE"/>
    <property type="match status" value="1"/>
</dbReference>
<dbReference type="PANTHER" id="PTHR12215">
    <property type="entry name" value="PHOSPHOPANTETHEINE TRANSFERASE"/>
    <property type="match status" value="1"/>
</dbReference>
<dbReference type="Pfam" id="PF01648">
    <property type="entry name" value="ACPS"/>
    <property type="match status" value="1"/>
</dbReference>
<dbReference type="SUPFAM" id="SSF56214">
    <property type="entry name" value="4'-phosphopantetheinyl transferase"/>
    <property type="match status" value="1"/>
</dbReference>
<feature type="chain" id="PRO_1000093887" description="Holo-[acyl-carrier-protein] synthase">
    <location>
        <begin position="1"/>
        <end position="119"/>
    </location>
</feature>
<feature type="binding site" evidence="1">
    <location>
        <position position="8"/>
    </location>
    <ligand>
        <name>Mg(2+)</name>
        <dbReference type="ChEBI" id="CHEBI:18420"/>
    </ligand>
</feature>
<feature type="binding site" evidence="1">
    <location>
        <position position="58"/>
    </location>
    <ligand>
        <name>Mg(2+)</name>
        <dbReference type="ChEBI" id="CHEBI:18420"/>
    </ligand>
</feature>